<gene>
    <name evidence="8" type="ORF">MYCTH_2305637</name>
</gene>
<sequence>MPASLLRFLALAGTAVGLTTNHNHSPSCRVLPGDAAWPSSRDWAKLNKTLNGHLIATVPQASVCHKSPFGQYDAQACEELKSSWDISTITHVNAPGDVLSQNFQNYSCVPFTDPSQPCQLGNYPSYVVNVTGAADVQAALKFAQKHNVRIVIKNTGHDYLGKSTGKGALSLWMHNLKSTKFIKNYKAPYYKGPAAKLGAGVEGFEAYAMANSTGHRIVGGTCPTVGIVGGYTQGGGHSILSSSYGVAADNVLEWEVVTADGRHLVATPTRNSDLYWALSGGGGGTFAVVLSMTARLHRDGIVGGTLLGFNDSAVGNEVYWEAVAAFHALLPDFLDGGNSFTYSVGNNSLTAYGTMPGADRDAVDRLLRPFLDDLASRGITPVVQPRVSTNYYDHFFTYLGPAPYGNAAYFPFTNSRIIPRSLVTDPKSNAVVTDLFRNISQVPAFSPFYCDSFSVADKPHPANSLHPAWRTGMLLCAPAGSWDWDASPEEMAARDRYAAETLQPMMDAATPGGSVYLNEANHLYANWKESFYGDNYARLLRVKKKYDPDSVFYVKTGVGSEVWDVDATGRLCRA</sequence>
<organism>
    <name type="scientific">Thermothelomyces thermophilus (strain ATCC 42464 / BCRC 31852 / DSM 1799)</name>
    <name type="common">Sporotrichum thermophile</name>
    <dbReference type="NCBI Taxonomy" id="573729"/>
    <lineage>
        <taxon>Eukaryota</taxon>
        <taxon>Fungi</taxon>
        <taxon>Dikarya</taxon>
        <taxon>Ascomycota</taxon>
        <taxon>Pezizomycotina</taxon>
        <taxon>Sordariomycetes</taxon>
        <taxon>Sordariomycetidae</taxon>
        <taxon>Sordariales</taxon>
        <taxon>Chaetomiaceae</taxon>
        <taxon>Thermothelomyces</taxon>
    </lineage>
</organism>
<accession>G2QDQ9</accession>
<dbReference type="EMBL" id="CP003004">
    <property type="protein sequence ID" value="AEO58370.1"/>
    <property type="molecule type" value="Genomic_DNA"/>
</dbReference>
<dbReference type="RefSeq" id="XP_003663615.1">
    <property type="nucleotide sequence ID" value="XM_003663567.1"/>
</dbReference>
<dbReference type="PDB" id="6F72">
    <property type="method" value="X-ray"/>
    <property type="resolution" value="2.00 A"/>
    <property type="chains" value="A=1-574"/>
</dbReference>
<dbReference type="PDB" id="6F73">
    <property type="method" value="X-ray"/>
    <property type="resolution" value="2.22 A"/>
    <property type="chains" value="A/B=1-574"/>
</dbReference>
<dbReference type="PDBsum" id="6F72"/>
<dbReference type="PDBsum" id="6F73"/>
<dbReference type="SMR" id="G2QDQ9"/>
<dbReference type="iPTMnet" id="G2QDQ9"/>
<dbReference type="GeneID" id="11509727"/>
<dbReference type="KEGG" id="mtm:MYCTH_2305637"/>
<dbReference type="VEuPathDB" id="FungiDB:MYCTH_2305637"/>
<dbReference type="eggNOG" id="ENOG502R8I5">
    <property type="taxonomic scope" value="Eukaryota"/>
</dbReference>
<dbReference type="HOGENOM" id="CLU_018354_4_2_1"/>
<dbReference type="InParanoid" id="G2QDQ9"/>
<dbReference type="OMA" id="WRSAIAI"/>
<dbReference type="OrthoDB" id="9983560at2759"/>
<dbReference type="Proteomes" id="UP000007322">
    <property type="component" value="Chromosome 3"/>
</dbReference>
<dbReference type="GO" id="GO:0005576">
    <property type="term" value="C:extracellular region"/>
    <property type="evidence" value="ECO:0007669"/>
    <property type="project" value="UniProtKB-SubCell"/>
</dbReference>
<dbReference type="GO" id="GO:0071949">
    <property type="term" value="F:FAD binding"/>
    <property type="evidence" value="ECO:0007669"/>
    <property type="project" value="InterPro"/>
</dbReference>
<dbReference type="GO" id="GO:0016491">
    <property type="term" value="F:oxidoreductase activity"/>
    <property type="evidence" value="ECO:0007669"/>
    <property type="project" value="UniProtKB-KW"/>
</dbReference>
<dbReference type="Gene3D" id="3.30.465.10">
    <property type="match status" value="2"/>
</dbReference>
<dbReference type="InterPro" id="IPR012951">
    <property type="entry name" value="BBE"/>
</dbReference>
<dbReference type="InterPro" id="IPR016166">
    <property type="entry name" value="FAD-bd_PCMH"/>
</dbReference>
<dbReference type="InterPro" id="IPR036318">
    <property type="entry name" value="FAD-bd_PCMH-like_sf"/>
</dbReference>
<dbReference type="InterPro" id="IPR016169">
    <property type="entry name" value="FAD-bd_PCMH_sub2"/>
</dbReference>
<dbReference type="InterPro" id="IPR050432">
    <property type="entry name" value="FAD-linked_Oxidoreductases_BP"/>
</dbReference>
<dbReference type="InterPro" id="IPR006094">
    <property type="entry name" value="Oxid_FAD_bind_N"/>
</dbReference>
<dbReference type="PANTHER" id="PTHR13878:SF91">
    <property type="entry name" value="FAD BINDING DOMAIN PROTEIN (AFU_ORTHOLOGUE AFUA_6G12070)-RELATED"/>
    <property type="match status" value="1"/>
</dbReference>
<dbReference type="PANTHER" id="PTHR13878">
    <property type="entry name" value="GULONOLACTONE OXIDASE"/>
    <property type="match status" value="1"/>
</dbReference>
<dbReference type="Pfam" id="PF08031">
    <property type="entry name" value="BBE"/>
    <property type="match status" value="1"/>
</dbReference>
<dbReference type="Pfam" id="PF01565">
    <property type="entry name" value="FAD_binding_4"/>
    <property type="match status" value="1"/>
</dbReference>
<dbReference type="SUPFAM" id="SSF56176">
    <property type="entry name" value="FAD-binding/transporter-associated domain-like"/>
    <property type="match status" value="1"/>
</dbReference>
<dbReference type="PROSITE" id="PS51387">
    <property type="entry name" value="FAD_PCMH"/>
    <property type="match status" value="1"/>
</dbReference>
<name>VAO15_THET4</name>
<reference key="1">
    <citation type="journal article" date="2011" name="Nat. Biotechnol.">
        <title>Comparative genomic analysis of the thermophilic biomass-degrading fungi Myceliophthora thermophila and Thielavia terrestris.</title>
        <authorList>
            <person name="Berka R.M."/>
            <person name="Grigoriev I.V."/>
            <person name="Otillar R."/>
            <person name="Salamov A."/>
            <person name="Grimwood J."/>
            <person name="Reid I."/>
            <person name="Ishmael N."/>
            <person name="John T."/>
            <person name="Darmond C."/>
            <person name="Moisan M.-C."/>
            <person name="Henrissat B."/>
            <person name="Coutinho P.M."/>
            <person name="Lombard V."/>
            <person name="Natvig D.O."/>
            <person name="Lindquist E."/>
            <person name="Schmutz J."/>
            <person name="Lucas S."/>
            <person name="Harris P."/>
            <person name="Powlowski J."/>
            <person name="Bellemare A."/>
            <person name="Taylor D."/>
            <person name="Butler G."/>
            <person name="de Vries R.P."/>
            <person name="Allijn I.E."/>
            <person name="van den Brink J."/>
            <person name="Ushinsky S."/>
            <person name="Storms R."/>
            <person name="Powell A.J."/>
            <person name="Paulsen I.T."/>
            <person name="Elbourne L.D.H."/>
            <person name="Baker S.E."/>
            <person name="Magnuson J."/>
            <person name="LaBoissiere S."/>
            <person name="Clutterbuck A.J."/>
            <person name="Martinez D."/>
            <person name="Wogulis M."/>
            <person name="de Leon A.L."/>
            <person name="Rey M.W."/>
            <person name="Tsang A."/>
        </authorList>
    </citation>
    <scope>NUCLEOTIDE SEQUENCE [LARGE SCALE GENOMIC DNA]</scope>
    <source>
        <strain>ATCC 42464 / BCRC 31852 / DSM 1799</strain>
    </source>
</reference>
<reference evidence="9 10" key="2">
    <citation type="journal article" date="2018" name="Molecules">
        <title>Characterization of two VAO-type flavoprotein oxidases from Myceliophthora thermophila.</title>
        <authorList>
            <person name="Ferrari A.R."/>
            <person name="Rozeboom H.J."/>
            <person name="Vugts A.S.C."/>
            <person name="Koetsier M.J."/>
            <person name="Floor R."/>
            <person name="Fraaije M.W."/>
        </authorList>
    </citation>
    <scope>X-RAY CRYSTALLOGRAPHY (2.00 ANGSTROMS) IN COMPLEX WITH FAD</scope>
    <scope>DISULFIDE BONDS</scope>
    <scope>GLYCOSYLATION AT ASN-47; ASN-105; ASN-129; ASN-211; ASN-310 AND ASN-438</scope>
</reference>
<comment type="function">
    <text evidence="7">Probably oxidoreductase that, when reduced, rapidly reacts with molecular oxygen, a hallmark of flavoprotein oxidases. A large panel of alcohols, including carbohydrates, steroids and secondary alcohols were tested as potential substrates, but none has been identified so far.</text>
</comment>
<comment type="cofactor">
    <cofactor evidence="5">
        <name>FAD</name>
        <dbReference type="ChEBI" id="CHEBI:57692"/>
    </cofactor>
    <text evidence="5">Binds 1 FAD per subunit in a bicovalent manner.</text>
</comment>
<comment type="subcellular location">
    <subcellularLocation>
        <location evidence="1">Secreted</location>
    </subcellularLocation>
</comment>
<comment type="PTM">
    <text evidence="5">The FAD cofactor is bound via a bicovalent 6-S-cysteinyl, 8alpha-N1-histidyl FAD linkage.</text>
</comment>
<comment type="similarity">
    <text evidence="6">Belongs to the oxygen-dependent FAD-linked oxidoreductase family.</text>
</comment>
<protein>
    <recommendedName>
        <fullName evidence="8">VAO-type flavoprotein oxidase VAO615</fullName>
    </recommendedName>
</protein>
<proteinExistence type="evidence at protein level"/>
<feature type="signal peptide" evidence="2">
    <location>
        <begin position="1"/>
        <end position="17"/>
    </location>
</feature>
<feature type="chain" id="PRO_5003435503" description="VAO-type flavoprotein oxidase VAO615">
    <location>
        <begin position="18"/>
        <end position="574"/>
    </location>
</feature>
<feature type="domain" description="FAD-binding PCMH-type" evidence="4">
    <location>
        <begin position="120"/>
        <end position="299"/>
    </location>
</feature>
<feature type="glycosylation site" description="N-linked (GlcNAc...) asparagine" evidence="5 9 10">
    <location>
        <position position="47"/>
    </location>
</feature>
<feature type="glycosylation site" description="N-linked (GlcNAc...) asparagine" evidence="5 9 10">
    <location>
        <position position="105"/>
    </location>
</feature>
<feature type="glycosylation site" description="N-linked (GlcNAc...) asparagine" evidence="5 9 10">
    <location>
        <position position="129"/>
    </location>
</feature>
<feature type="glycosylation site" description="N-linked (GlcNAc...) asparagine" evidence="5 9 10">
    <location>
        <position position="211"/>
    </location>
</feature>
<feature type="glycosylation site" description="N-linked (GlcNAc...) asparagine" evidence="5 9 10">
    <location>
        <position position="310"/>
    </location>
</feature>
<feature type="glycosylation site" description="N-linked (GlcNAc...) asparagine" evidence="3">
    <location>
        <position position="346"/>
    </location>
</feature>
<feature type="glycosylation site" description="N-linked (GlcNAc...) asparagine" evidence="5 9 10">
    <location>
        <position position="438"/>
    </location>
</feature>
<feature type="disulfide bond" evidence="9 10">
    <location>
        <begin position="28"/>
        <end position="572"/>
    </location>
</feature>
<feature type="disulfide bond" evidence="9 10">
    <location>
        <begin position="64"/>
        <end position="77"/>
    </location>
</feature>
<feature type="disulfide bond" evidence="9 10">
    <location>
        <begin position="108"/>
        <end position="118"/>
    </location>
</feature>
<feature type="disulfide bond" evidence="9 10">
    <location>
        <begin position="450"/>
        <end position="476"/>
    </location>
</feature>
<feature type="cross-link" description="6-(S-cysteinyl)-8alpha-(pros-histidyl)-FAD (His-Cys)" evidence="5">
    <location>
        <begin position="157"/>
        <end position="222"/>
    </location>
</feature>
<feature type="helix" evidence="11">
    <location>
        <begin position="40"/>
        <end position="49"/>
    </location>
</feature>
<feature type="turn" evidence="11">
    <location>
        <begin position="50"/>
        <end position="52"/>
    </location>
</feature>
<feature type="strand" evidence="11">
    <location>
        <begin position="54"/>
        <end position="56"/>
    </location>
</feature>
<feature type="helix" evidence="11">
    <location>
        <begin position="60"/>
        <end position="64"/>
    </location>
</feature>
<feature type="strand" evidence="11">
    <location>
        <begin position="67"/>
        <end position="69"/>
    </location>
</feature>
<feature type="helix" evidence="11">
    <location>
        <begin position="74"/>
        <end position="81"/>
    </location>
</feature>
<feature type="turn" evidence="11">
    <location>
        <begin position="82"/>
        <end position="85"/>
    </location>
</feature>
<feature type="helix" evidence="11">
    <location>
        <begin position="89"/>
        <end position="92"/>
    </location>
</feature>
<feature type="strand" evidence="11">
    <location>
        <begin position="94"/>
        <end position="96"/>
    </location>
</feature>
<feature type="helix" evidence="11">
    <location>
        <begin position="101"/>
        <end position="104"/>
    </location>
</feature>
<feature type="strand" evidence="11">
    <location>
        <begin position="125"/>
        <end position="129"/>
    </location>
</feature>
<feature type="helix" evidence="11">
    <location>
        <begin position="133"/>
        <end position="146"/>
    </location>
</feature>
<feature type="strand" evidence="11">
    <location>
        <begin position="150"/>
        <end position="156"/>
    </location>
</feature>
<feature type="strand" evidence="11">
    <location>
        <begin position="169"/>
        <end position="172"/>
    </location>
</feature>
<feature type="strand" evidence="11">
    <location>
        <begin position="179"/>
        <end position="186"/>
    </location>
</feature>
<feature type="strand" evidence="11">
    <location>
        <begin position="191"/>
        <end position="198"/>
    </location>
</feature>
<feature type="helix" evidence="11">
    <location>
        <begin position="203"/>
        <end position="212"/>
    </location>
</feature>
<feature type="turn" evidence="11">
    <location>
        <begin position="227"/>
        <end position="229"/>
    </location>
</feature>
<feature type="helix" evidence="11">
    <location>
        <begin position="230"/>
        <end position="233"/>
    </location>
</feature>
<feature type="helix" evidence="11">
    <location>
        <begin position="241"/>
        <end position="244"/>
    </location>
</feature>
<feature type="helix" evidence="11">
    <location>
        <begin position="247"/>
        <end position="250"/>
    </location>
</feature>
<feature type="strand" evidence="11">
    <location>
        <begin position="251"/>
        <end position="257"/>
    </location>
</feature>
<feature type="strand" evidence="11">
    <location>
        <begin position="263"/>
        <end position="267"/>
    </location>
</feature>
<feature type="helix" evidence="11">
    <location>
        <begin position="272"/>
        <end position="278"/>
    </location>
</feature>
<feature type="strand" evidence="11">
    <location>
        <begin position="283"/>
        <end position="286"/>
    </location>
</feature>
<feature type="strand" evidence="11">
    <location>
        <begin position="288"/>
        <end position="295"/>
    </location>
</feature>
<feature type="strand" evidence="11">
    <location>
        <begin position="302"/>
        <end position="311"/>
    </location>
</feature>
<feature type="turn" evidence="11">
    <location>
        <begin position="312"/>
        <end position="314"/>
    </location>
</feature>
<feature type="helix" evidence="11">
    <location>
        <begin position="316"/>
        <end position="335"/>
    </location>
</feature>
<feature type="strand" evidence="11">
    <location>
        <begin position="339"/>
        <end position="344"/>
    </location>
</feature>
<feature type="strand" evidence="11">
    <location>
        <begin position="346"/>
        <end position="356"/>
    </location>
</feature>
<feature type="helix" evidence="11">
    <location>
        <begin position="360"/>
        <end position="376"/>
    </location>
</feature>
<feature type="strand" evidence="11">
    <location>
        <begin position="382"/>
        <end position="390"/>
    </location>
</feature>
<feature type="helix" evidence="11">
    <location>
        <begin position="391"/>
        <end position="399"/>
    </location>
</feature>
<feature type="turn" evidence="11">
    <location>
        <begin position="402"/>
        <end position="404"/>
    </location>
</feature>
<feature type="strand" evidence="11">
    <location>
        <begin position="411"/>
        <end position="413"/>
    </location>
</feature>
<feature type="strand" evidence="11">
    <location>
        <begin position="416"/>
        <end position="419"/>
    </location>
</feature>
<feature type="helix" evidence="11">
    <location>
        <begin position="420"/>
        <end position="424"/>
    </location>
</feature>
<feature type="helix" evidence="11">
    <location>
        <begin position="426"/>
        <end position="439"/>
    </location>
</feature>
<feature type="helix" evidence="12">
    <location>
        <begin position="443"/>
        <end position="445"/>
    </location>
</feature>
<feature type="strand" evidence="11">
    <location>
        <begin position="447"/>
        <end position="452"/>
    </location>
</feature>
<feature type="helix" evidence="11">
    <location>
        <begin position="468"/>
        <end position="471"/>
    </location>
</feature>
<feature type="strand" evidence="11">
    <location>
        <begin position="472"/>
        <end position="477"/>
    </location>
</feature>
<feature type="helix" evidence="11">
    <location>
        <begin position="488"/>
        <end position="500"/>
    </location>
</feature>
<feature type="helix" evidence="11">
    <location>
        <begin position="502"/>
        <end position="508"/>
    </location>
</feature>
<feature type="helix" evidence="11">
    <location>
        <begin position="527"/>
        <end position="532"/>
    </location>
</feature>
<feature type="helix" evidence="11">
    <location>
        <begin position="533"/>
        <end position="535"/>
    </location>
</feature>
<feature type="helix" evidence="11">
    <location>
        <begin position="536"/>
        <end position="546"/>
    </location>
</feature>
<feature type="helix" evidence="11">
    <location>
        <begin position="560"/>
        <end position="562"/>
    </location>
</feature>
<feature type="strand" evidence="11">
    <location>
        <begin position="563"/>
        <end position="565"/>
    </location>
</feature>
<feature type="strand" evidence="11">
    <location>
        <begin position="571"/>
        <end position="573"/>
    </location>
</feature>
<evidence type="ECO:0000250" key="1">
    <source>
        <dbReference type="UniProtKB" id="G2QG48"/>
    </source>
</evidence>
<evidence type="ECO:0000255" key="2"/>
<evidence type="ECO:0000255" key="3">
    <source>
        <dbReference type="PROSITE-ProRule" id="PRU00498"/>
    </source>
</evidence>
<evidence type="ECO:0000255" key="4">
    <source>
        <dbReference type="PROSITE-ProRule" id="PRU00718"/>
    </source>
</evidence>
<evidence type="ECO:0000269" key="5">
    <source>
    </source>
</evidence>
<evidence type="ECO:0000305" key="6"/>
<evidence type="ECO:0000305" key="7">
    <source>
    </source>
</evidence>
<evidence type="ECO:0000312" key="8">
    <source>
        <dbReference type="EMBL" id="AEO58370.1"/>
    </source>
</evidence>
<evidence type="ECO:0007744" key="9">
    <source>
        <dbReference type="PDB" id="6F72"/>
    </source>
</evidence>
<evidence type="ECO:0007744" key="10">
    <source>
        <dbReference type="PDB" id="6F73"/>
    </source>
</evidence>
<evidence type="ECO:0007829" key="11">
    <source>
        <dbReference type="PDB" id="6F72"/>
    </source>
</evidence>
<evidence type="ECO:0007829" key="12">
    <source>
        <dbReference type="PDB" id="6F73"/>
    </source>
</evidence>
<keyword id="KW-0002">3D-structure</keyword>
<keyword id="KW-1015">Disulfide bond</keyword>
<keyword id="KW-0274">FAD</keyword>
<keyword id="KW-0285">Flavoprotein</keyword>
<keyword id="KW-0325">Glycoprotein</keyword>
<keyword id="KW-0560">Oxidoreductase</keyword>
<keyword id="KW-1185">Reference proteome</keyword>
<keyword id="KW-0964">Secreted</keyword>
<keyword id="KW-0732">Signal</keyword>